<comment type="function">
    <text evidence="1">Involved in transcription antitermination. Required for transcription of ribosomal RNA (rRNA) genes. Binds specifically to the boxA antiterminator sequence of the ribosomal RNA (rrn) operons.</text>
</comment>
<comment type="similarity">
    <text evidence="1">Belongs to the NusB family.</text>
</comment>
<keyword id="KW-1185">Reference proteome</keyword>
<keyword id="KW-0694">RNA-binding</keyword>
<keyword id="KW-0804">Transcription</keyword>
<keyword id="KW-0889">Transcription antitermination</keyword>
<keyword id="KW-0805">Transcription regulation</keyword>
<reference key="1">
    <citation type="journal article" date="2006" name="Science">
        <title>A small microbial genome: the end of a long symbiotic relationship?</title>
        <authorList>
            <person name="Perez-Brocal V."/>
            <person name="Gil R."/>
            <person name="Ramos S."/>
            <person name="Lamelas A."/>
            <person name="Postigo M."/>
            <person name="Michelena J.M."/>
            <person name="Silva F.J."/>
            <person name="Moya A."/>
            <person name="Latorre A."/>
        </authorList>
    </citation>
    <scope>NUCLEOTIDE SEQUENCE [LARGE SCALE GENOMIC DNA]</scope>
    <source>
        <strain>Cc</strain>
    </source>
</reference>
<gene>
    <name evidence="1" type="primary">nusB</name>
    <name type="ordered locus">BCc_285</name>
</gene>
<organism>
    <name type="scientific">Buchnera aphidicola subsp. Cinara cedri (strain Cc)</name>
    <dbReference type="NCBI Taxonomy" id="372461"/>
    <lineage>
        <taxon>Bacteria</taxon>
        <taxon>Pseudomonadati</taxon>
        <taxon>Pseudomonadota</taxon>
        <taxon>Gammaproteobacteria</taxon>
        <taxon>Enterobacterales</taxon>
        <taxon>Erwiniaceae</taxon>
        <taxon>Buchnera</taxon>
    </lineage>
</organism>
<dbReference type="EMBL" id="CP000263">
    <property type="protein sequence ID" value="ABJ90746.1"/>
    <property type="molecule type" value="Genomic_DNA"/>
</dbReference>
<dbReference type="RefSeq" id="WP_011672665.1">
    <property type="nucleotide sequence ID" value="NC_008513.1"/>
</dbReference>
<dbReference type="SMR" id="Q057F3"/>
<dbReference type="STRING" id="372461.BCc_285"/>
<dbReference type="KEGG" id="bcc:BCc_285"/>
<dbReference type="eggNOG" id="COG0781">
    <property type="taxonomic scope" value="Bacteria"/>
</dbReference>
<dbReference type="HOGENOM" id="CLU_087843_4_1_6"/>
<dbReference type="OrthoDB" id="9789556at2"/>
<dbReference type="Proteomes" id="UP000000669">
    <property type="component" value="Chromosome"/>
</dbReference>
<dbReference type="GO" id="GO:0005829">
    <property type="term" value="C:cytosol"/>
    <property type="evidence" value="ECO:0007669"/>
    <property type="project" value="TreeGrafter"/>
</dbReference>
<dbReference type="GO" id="GO:0003723">
    <property type="term" value="F:RNA binding"/>
    <property type="evidence" value="ECO:0007669"/>
    <property type="project" value="UniProtKB-UniRule"/>
</dbReference>
<dbReference type="GO" id="GO:0006353">
    <property type="term" value="P:DNA-templated transcription termination"/>
    <property type="evidence" value="ECO:0007669"/>
    <property type="project" value="UniProtKB-UniRule"/>
</dbReference>
<dbReference type="GO" id="GO:0031564">
    <property type="term" value="P:transcription antitermination"/>
    <property type="evidence" value="ECO:0007669"/>
    <property type="project" value="UniProtKB-KW"/>
</dbReference>
<dbReference type="Gene3D" id="1.10.940.10">
    <property type="entry name" value="NusB-like"/>
    <property type="match status" value="1"/>
</dbReference>
<dbReference type="HAMAP" id="MF_00073">
    <property type="entry name" value="NusB"/>
    <property type="match status" value="1"/>
</dbReference>
<dbReference type="InterPro" id="IPR035926">
    <property type="entry name" value="NusB-like_sf"/>
</dbReference>
<dbReference type="InterPro" id="IPR011605">
    <property type="entry name" value="NusB_fam"/>
</dbReference>
<dbReference type="InterPro" id="IPR006027">
    <property type="entry name" value="NusB_RsmB_TIM44"/>
</dbReference>
<dbReference type="NCBIfam" id="TIGR01951">
    <property type="entry name" value="nusB"/>
    <property type="match status" value="1"/>
</dbReference>
<dbReference type="PANTHER" id="PTHR11078:SF3">
    <property type="entry name" value="ANTITERMINATION NUSB DOMAIN-CONTAINING PROTEIN"/>
    <property type="match status" value="1"/>
</dbReference>
<dbReference type="PANTHER" id="PTHR11078">
    <property type="entry name" value="N UTILIZATION SUBSTANCE PROTEIN B-RELATED"/>
    <property type="match status" value="1"/>
</dbReference>
<dbReference type="Pfam" id="PF01029">
    <property type="entry name" value="NusB"/>
    <property type="match status" value="1"/>
</dbReference>
<dbReference type="SUPFAM" id="SSF48013">
    <property type="entry name" value="NusB-like"/>
    <property type="match status" value="1"/>
</dbReference>
<proteinExistence type="inferred from homology"/>
<feature type="chain" id="PRO_1000023710" description="Transcription antitermination protein NusB">
    <location>
        <begin position="1"/>
        <end position="142"/>
    </location>
</feature>
<sequence>MKSKRRKARELAIQVLYSWQISKKIVLFETEKYVIEQNKKYSLDKIYFHKIVTGVIKNIFYIDKIIKKNISKKKNRLDYIEQAILRLASYEIIKRLDIPYKVIINEGIELAKIYGSNKSHKFINSILDKIITNKNNIKIKNF</sequence>
<evidence type="ECO:0000255" key="1">
    <source>
        <dbReference type="HAMAP-Rule" id="MF_00073"/>
    </source>
</evidence>
<protein>
    <recommendedName>
        <fullName evidence="1">Transcription antitermination protein NusB</fullName>
    </recommendedName>
    <alternativeName>
        <fullName evidence="1">Antitermination factor NusB</fullName>
    </alternativeName>
</protein>
<accession>Q057F3</accession>
<name>NUSB_BUCCC</name>